<reference key="1">
    <citation type="journal article" date="1989" name="Mol. Gen. Genet.">
        <title>Genes coding for the reversible ADP-ribosylation system of dinitrogenase reductase from Rhodospirillum rubrum.</title>
        <authorList>
            <person name="Fitzmaurice W.P."/>
            <person name="Saari L.L."/>
            <person name="Lowery R.G."/>
            <person name="Ludden P.W."/>
            <person name="Roberts G.P."/>
        </authorList>
    </citation>
    <scope>NUCLEOTIDE SEQUENCE [GENOMIC DNA]</scope>
    <source>
        <strain>UR2</strain>
    </source>
</reference>
<dbReference type="EMBL" id="X16187">
    <property type="protein sequence ID" value="CAA34311.1"/>
    <property type="molecule type" value="Genomic_DNA"/>
</dbReference>
<dbReference type="PIR" id="JQ0446">
    <property type="entry name" value="JQ0446"/>
</dbReference>
<dbReference type="RefSeq" id="WP_011388762.1">
    <property type="nucleotide sequence ID" value="NZ_DAMDTZ010000026.1"/>
</dbReference>
<dbReference type="SMR" id="P14301"/>
<dbReference type="OMA" id="FFEKPGC"/>
<dbReference type="CDD" id="cd03033">
    <property type="entry name" value="ArsC_15kD"/>
    <property type="match status" value="1"/>
</dbReference>
<dbReference type="Gene3D" id="3.40.30.10">
    <property type="entry name" value="Glutaredoxin"/>
    <property type="match status" value="1"/>
</dbReference>
<dbReference type="InterPro" id="IPR006660">
    <property type="entry name" value="Arsenate_reductase-like"/>
</dbReference>
<dbReference type="InterPro" id="IPR006503">
    <property type="entry name" value="Nase-assoc"/>
</dbReference>
<dbReference type="InterPro" id="IPR036249">
    <property type="entry name" value="Thioredoxin-like_sf"/>
</dbReference>
<dbReference type="NCBIfam" id="TIGR01616">
    <property type="entry name" value="nitro_assoc"/>
    <property type="match status" value="1"/>
</dbReference>
<dbReference type="Pfam" id="PF03960">
    <property type="entry name" value="ArsC"/>
    <property type="match status" value="1"/>
</dbReference>
<dbReference type="SUPFAM" id="SSF52833">
    <property type="entry name" value="Thioredoxin-like"/>
    <property type="match status" value="1"/>
</dbReference>
<dbReference type="PROSITE" id="PS51353">
    <property type="entry name" value="ARSC"/>
    <property type="match status" value="1"/>
</dbReference>
<proteinExistence type="inferred from homology"/>
<comment type="similarity">
    <text evidence="2">Belongs to the ArsC family.</text>
</comment>
<accession>P14301</accession>
<sequence length="143" mass="15657">MADVLFFEKPGCRNNTRQKALLIASGHRVEAHDIRQQPWTAETLRPYFGDKPVAQWINPAAPRVKAGEVRPEALDESEALALMVKDALLIRRPLMAVGQTKTCGFDRAAVNAWIGLIAQDPGDIETCPSQATNHRCAEEPGAA</sequence>
<feature type="chain" id="PRO_0000066197" description="Uncharacterized 15.7 kDa protein in draG 3'region">
    <location>
        <begin position="1"/>
        <end position="143"/>
    </location>
</feature>
<feature type="active site" evidence="1">
    <location>
        <position position="12"/>
    </location>
</feature>
<evidence type="ECO:0000255" key="1">
    <source>
        <dbReference type="PROSITE-ProRule" id="PRU01282"/>
    </source>
</evidence>
<evidence type="ECO:0000305" key="2"/>
<organism>
    <name type="scientific">Rhodospirillum rubrum</name>
    <dbReference type="NCBI Taxonomy" id="1085"/>
    <lineage>
        <taxon>Bacteria</taxon>
        <taxon>Pseudomonadati</taxon>
        <taxon>Pseudomonadota</taxon>
        <taxon>Alphaproteobacteria</taxon>
        <taxon>Rhodospirillales</taxon>
        <taxon>Rhodospirillaceae</taxon>
        <taxon>Rhodospirillum</taxon>
    </lineage>
</organism>
<protein>
    <recommendedName>
        <fullName>Uncharacterized 15.7 kDa protein in draG 3'region</fullName>
    </recommendedName>
</protein>
<name>YDRA_RHORU</name>